<comment type="function">
    <text evidence="1">Catalyzes the oxidation of 5,10-methylenetetrahydrofolate to 5,10-methenyltetrahydrofolate and then the hydrolysis of 5,10-methenyltetrahydrofolate to 10-formyltetrahydrofolate.</text>
</comment>
<comment type="catalytic activity">
    <reaction evidence="1">
        <text>(6R)-5,10-methylene-5,6,7,8-tetrahydrofolate + NADP(+) = (6R)-5,10-methenyltetrahydrofolate + NADPH</text>
        <dbReference type="Rhea" id="RHEA:22812"/>
        <dbReference type="ChEBI" id="CHEBI:15636"/>
        <dbReference type="ChEBI" id="CHEBI:57455"/>
        <dbReference type="ChEBI" id="CHEBI:57783"/>
        <dbReference type="ChEBI" id="CHEBI:58349"/>
        <dbReference type="EC" id="1.5.1.5"/>
    </reaction>
</comment>
<comment type="catalytic activity">
    <reaction evidence="1">
        <text>(6R)-5,10-methenyltetrahydrofolate + H2O = (6R)-10-formyltetrahydrofolate + H(+)</text>
        <dbReference type="Rhea" id="RHEA:23700"/>
        <dbReference type="ChEBI" id="CHEBI:15377"/>
        <dbReference type="ChEBI" id="CHEBI:15378"/>
        <dbReference type="ChEBI" id="CHEBI:57455"/>
        <dbReference type="ChEBI" id="CHEBI:195366"/>
        <dbReference type="EC" id="3.5.4.9"/>
    </reaction>
</comment>
<comment type="pathway">
    <text evidence="1">One-carbon metabolism; tetrahydrofolate interconversion.</text>
</comment>
<comment type="subunit">
    <text evidence="1">Homodimer.</text>
</comment>
<comment type="similarity">
    <text evidence="1">Belongs to the tetrahydrofolate dehydrogenase/cyclohydrolase family.</text>
</comment>
<gene>
    <name evidence="1" type="primary">folD</name>
    <name type="ordered locus">YpsIP31758_3012</name>
</gene>
<accession>A7FL44</accession>
<organism>
    <name type="scientific">Yersinia pseudotuberculosis serotype O:1b (strain IP 31758)</name>
    <dbReference type="NCBI Taxonomy" id="349747"/>
    <lineage>
        <taxon>Bacteria</taxon>
        <taxon>Pseudomonadati</taxon>
        <taxon>Pseudomonadota</taxon>
        <taxon>Gammaproteobacteria</taxon>
        <taxon>Enterobacterales</taxon>
        <taxon>Yersiniaceae</taxon>
        <taxon>Yersinia</taxon>
    </lineage>
</organism>
<evidence type="ECO:0000255" key="1">
    <source>
        <dbReference type="HAMAP-Rule" id="MF_01576"/>
    </source>
</evidence>
<dbReference type="EC" id="1.5.1.5" evidence="1"/>
<dbReference type="EC" id="3.5.4.9" evidence="1"/>
<dbReference type="EMBL" id="CP000720">
    <property type="protein sequence ID" value="ABS46002.1"/>
    <property type="molecule type" value="Genomic_DNA"/>
</dbReference>
<dbReference type="RefSeq" id="WP_002209774.1">
    <property type="nucleotide sequence ID" value="NC_009708.1"/>
</dbReference>
<dbReference type="SMR" id="A7FL44"/>
<dbReference type="GeneID" id="57975784"/>
<dbReference type="KEGG" id="ypi:YpsIP31758_3012"/>
<dbReference type="HOGENOM" id="CLU_034045_2_1_6"/>
<dbReference type="UniPathway" id="UPA00193"/>
<dbReference type="Proteomes" id="UP000002412">
    <property type="component" value="Chromosome"/>
</dbReference>
<dbReference type="GO" id="GO:0005829">
    <property type="term" value="C:cytosol"/>
    <property type="evidence" value="ECO:0007669"/>
    <property type="project" value="TreeGrafter"/>
</dbReference>
<dbReference type="GO" id="GO:0004477">
    <property type="term" value="F:methenyltetrahydrofolate cyclohydrolase activity"/>
    <property type="evidence" value="ECO:0007669"/>
    <property type="project" value="UniProtKB-UniRule"/>
</dbReference>
<dbReference type="GO" id="GO:0004488">
    <property type="term" value="F:methylenetetrahydrofolate dehydrogenase (NADP+) activity"/>
    <property type="evidence" value="ECO:0007669"/>
    <property type="project" value="UniProtKB-UniRule"/>
</dbReference>
<dbReference type="GO" id="GO:0000105">
    <property type="term" value="P:L-histidine biosynthetic process"/>
    <property type="evidence" value="ECO:0007669"/>
    <property type="project" value="UniProtKB-KW"/>
</dbReference>
<dbReference type="GO" id="GO:0009086">
    <property type="term" value="P:methionine biosynthetic process"/>
    <property type="evidence" value="ECO:0007669"/>
    <property type="project" value="UniProtKB-KW"/>
</dbReference>
<dbReference type="GO" id="GO:0006164">
    <property type="term" value="P:purine nucleotide biosynthetic process"/>
    <property type="evidence" value="ECO:0007669"/>
    <property type="project" value="UniProtKB-KW"/>
</dbReference>
<dbReference type="GO" id="GO:0035999">
    <property type="term" value="P:tetrahydrofolate interconversion"/>
    <property type="evidence" value="ECO:0007669"/>
    <property type="project" value="UniProtKB-UniRule"/>
</dbReference>
<dbReference type="CDD" id="cd01080">
    <property type="entry name" value="NAD_bind_m-THF_DH_Cyclohyd"/>
    <property type="match status" value="1"/>
</dbReference>
<dbReference type="FunFam" id="3.40.50.10860:FF:000001">
    <property type="entry name" value="Bifunctional protein FolD"/>
    <property type="match status" value="1"/>
</dbReference>
<dbReference type="FunFam" id="3.40.50.720:FF:000006">
    <property type="entry name" value="Bifunctional protein FolD"/>
    <property type="match status" value="1"/>
</dbReference>
<dbReference type="Gene3D" id="3.40.50.10860">
    <property type="entry name" value="Leucine Dehydrogenase, chain A, domain 1"/>
    <property type="match status" value="1"/>
</dbReference>
<dbReference type="Gene3D" id="3.40.50.720">
    <property type="entry name" value="NAD(P)-binding Rossmann-like Domain"/>
    <property type="match status" value="1"/>
</dbReference>
<dbReference type="HAMAP" id="MF_01576">
    <property type="entry name" value="THF_DHG_CYH"/>
    <property type="match status" value="1"/>
</dbReference>
<dbReference type="InterPro" id="IPR046346">
    <property type="entry name" value="Aminoacid_DH-like_N_sf"/>
</dbReference>
<dbReference type="InterPro" id="IPR036291">
    <property type="entry name" value="NAD(P)-bd_dom_sf"/>
</dbReference>
<dbReference type="InterPro" id="IPR000672">
    <property type="entry name" value="THF_DH/CycHdrlase"/>
</dbReference>
<dbReference type="InterPro" id="IPR020630">
    <property type="entry name" value="THF_DH/CycHdrlase_cat_dom"/>
</dbReference>
<dbReference type="InterPro" id="IPR020867">
    <property type="entry name" value="THF_DH/CycHdrlase_CS"/>
</dbReference>
<dbReference type="InterPro" id="IPR020631">
    <property type="entry name" value="THF_DH/CycHdrlase_NAD-bd_dom"/>
</dbReference>
<dbReference type="NCBIfam" id="NF008058">
    <property type="entry name" value="PRK10792.1"/>
    <property type="match status" value="1"/>
</dbReference>
<dbReference type="NCBIfam" id="NF010783">
    <property type="entry name" value="PRK14186.1"/>
    <property type="match status" value="1"/>
</dbReference>
<dbReference type="PANTHER" id="PTHR48099:SF5">
    <property type="entry name" value="C-1-TETRAHYDROFOLATE SYNTHASE, CYTOPLASMIC"/>
    <property type="match status" value="1"/>
</dbReference>
<dbReference type="PANTHER" id="PTHR48099">
    <property type="entry name" value="C-1-TETRAHYDROFOLATE SYNTHASE, CYTOPLASMIC-RELATED"/>
    <property type="match status" value="1"/>
</dbReference>
<dbReference type="Pfam" id="PF00763">
    <property type="entry name" value="THF_DHG_CYH"/>
    <property type="match status" value="1"/>
</dbReference>
<dbReference type="Pfam" id="PF02882">
    <property type="entry name" value="THF_DHG_CYH_C"/>
    <property type="match status" value="1"/>
</dbReference>
<dbReference type="PRINTS" id="PR00085">
    <property type="entry name" value="THFDHDRGNASE"/>
</dbReference>
<dbReference type="SUPFAM" id="SSF53223">
    <property type="entry name" value="Aminoacid dehydrogenase-like, N-terminal domain"/>
    <property type="match status" value="1"/>
</dbReference>
<dbReference type="SUPFAM" id="SSF51735">
    <property type="entry name" value="NAD(P)-binding Rossmann-fold domains"/>
    <property type="match status" value="1"/>
</dbReference>
<dbReference type="PROSITE" id="PS00766">
    <property type="entry name" value="THF_DHG_CYH_1"/>
    <property type="match status" value="1"/>
</dbReference>
<dbReference type="PROSITE" id="PS00767">
    <property type="entry name" value="THF_DHG_CYH_2"/>
    <property type="match status" value="1"/>
</dbReference>
<proteinExistence type="inferred from homology"/>
<keyword id="KW-0028">Amino-acid biosynthesis</keyword>
<keyword id="KW-0368">Histidine biosynthesis</keyword>
<keyword id="KW-0378">Hydrolase</keyword>
<keyword id="KW-0486">Methionine biosynthesis</keyword>
<keyword id="KW-0511">Multifunctional enzyme</keyword>
<keyword id="KW-0521">NADP</keyword>
<keyword id="KW-0554">One-carbon metabolism</keyword>
<keyword id="KW-0560">Oxidoreductase</keyword>
<keyword id="KW-0658">Purine biosynthesis</keyword>
<feature type="chain" id="PRO_1000069261" description="Bifunctional protein FolD">
    <location>
        <begin position="1"/>
        <end position="288"/>
    </location>
</feature>
<feature type="binding site" evidence="1">
    <location>
        <begin position="166"/>
        <end position="168"/>
    </location>
    <ligand>
        <name>NADP(+)</name>
        <dbReference type="ChEBI" id="CHEBI:58349"/>
    </ligand>
</feature>
<feature type="binding site" evidence="1">
    <location>
        <position position="232"/>
    </location>
    <ligand>
        <name>NADP(+)</name>
        <dbReference type="ChEBI" id="CHEBI:58349"/>
    </ligand>
</feature>
<sequence length="288" mass="30983">MSAKIIDGKTIAQQVRNEVAAVVQQRLAAGKRAPGLAVVLVGENPASQIYVASKRKACEEVGFVSRSYDLPMATSEAELLALIDSLNEDTEIDGILIQLPLPNGIDNVKVLERIHPDKDVDGFHPYNVGRLCQRAPKLRACTPRGIMTLLERYDIPTYGLNAVVVGASNIVGRPMSLELLLAGCTTTVTHRFTKNLRHHIENADLLVVAVGKPGFIPGEWIKPGAIVIDVGINRLESGKVVGDVAFDVAAERAGWITPVPGGVGPMTVATLIQNTLQACEEYHDISQN</sequence>
<protein>
    <recommendedName>
        <fullName evidence="1">Bifunctional protein FolD</fullName>
    </recommendedName>
    <domain>
        <recommendedName>
            <fullName evidence="1">Methylenetetrahydrofolate dehydrogenase</fullName>
            <ecNumber evidence="1">1.5.1.5</ecNumber>
        </recommendedName>
    </domain>
    <domain>
        <recommendedName>
            <fullName evidence="1">Methenyltetrahydrofolate cyclohydrolase</fullName>
            <ecNumber evidence="1">3.5.4.9</ecNumber>
        </recommendedName>
    </domain>
</protein>
<name>FOLD_YERP3</name>
<reference key="1">
    <citation type="journal article" date="2007" name="PLoS Genet.">
        <title>The complete genome sequence of Yersinia pseudotuberculosis IP31758, the causative agent of Far East scarlet-like fever.</title>
        <authorList>
            <person name="Eppinger M."/>
            <person name="Rosovitz M.J."/>
            <person name="Fricke W.F."/>
            <person name="Rasko D.A."/>
            <person name="Kokorina G."/>
            <person name="Fayolle C."/>
            <person name="Lindler L.E."/>
            <person name="Carniel E."/>
            <person name="Ravel J."/>
        </authorList>
    </citation>
    <scope>NUCLEOTIDE SEQUENCE [LARGE SCALE GENOMIC DNA]</scope>
    <source>
        <strain>IP 31758</strain>
    </source>
</reference>